<dbReference type="EMBL" id="CP000001">
    <property type="protein sequence ID" value="AAU16876.1"/>
    <property type="molecule type" value="Genomic_DNA"/>
</dbReference>
<dbReference type="RefSeq" id="WP_001123317.1">
    <property type="nucleotide sequence ID" value="NZ_CP009968.1"/>
</dbReference>
<dbReference type="SMR" id="Q637E7"/>
<dbReference type="KEGG" id="bcz:BCE33L3386"/>
<dbReference type="PATRIC" id="fig|288681.22.peg.2031"/>
<dbReference type="Proteomes" id="UP000002612">
    <property type="component" value="Chromosome"/>
</dbReference>
<dbReference type="GO" id="GO:0005886">
    <property type="term" value="C:plasma membrane"/>
    <property type="evidence" value="ECO:0007669"/>
    <property type="project" value="UniProtKB-SubCell"/>
</dbReference>
<dbReference type="HAMAP" id="MF_00363">
    <property type="entry name" value="UPF0154"/>
    <property type="match status" value="1"/>
</dbReference>
<dbReference type="InterPro" id="IPR005359">
    <property type="entry name" value="UPF0154"/>
</dbReference>
<dbReference type="NCBIfam" id="NF002503">
    <property type="entry name" value="PRK01844.1"/>
    <property type="match status" value="1"/>
</dbReference>
<dbReference type="Pfam" id="PF03672">
    <property type="entry name" value="UPF0154"/>
    <property type="match status" value="1"/>
</dbReference>
<keyword id="KW-1003">Cell membrane</keyword>
<keyword id="KW-0472">Membrane</keyword>
<keyword id="KW-0812">Transmembrane</keyword>
<keyword id="KW-1133">Transmembrane helix</keyword>
<sequence>MPIWLGILVGVVALVAGVALGFFIARKYMMNYLQKNPPINEQMLKMMMMQMGQKPSQKKINQMMSAMNKQQMK</sequence>
<reference key="1">
    <citation type="journal article" date="2006" name="J. Bacteriol.">
        <title>Pathogenomic sequence analysis of Bacillus cereus and Bacillus thuringiensis isolates closely related to Bacillus anthracis.</title>
        <authorList>
            <person name="Han C.S."/>
            <person name="Xie G."/>
            <person name="Challacombe J.F."/>
            <person name="Altherr M.R."/>
            <person name="Bhotika S.S."/>
            <person name="Bruce D."/>
            <person name="Campbell C.S."/>
            <person name="Campbell M.L."/>
            <person name="Chen J."/>
            <person name="Chertkov O."/>
            <person name="Cleland C."/>
            <person name="Dimitrijevic M."/>
            <person name="Doggett N.A."/>
            <person name="Fawcett J.J."/>
            <person name="Glavina T."/>
            <person name="Goodwin L.A."/>
            <person name="Hill K.K."/>
            <person name="Hitchcock P."/>
            <person name="Jackson P.J."/>
            <person name="Keim P."/>
            <person name="Kewalramani A.R."/>
            <person name="Longmire J."/>
            <person name="Lucas S."/>
            <person name="Malfatti S."/>
            <person name="McMurry K."/>
            <person name="Meincke L.J."/>
            <person name="Misra M."/>
            <person name="Moseman B.L."/>
            <person name="Mundt M."/>
            <person name="Munk A.C."/>
            <person name="Okinaka R.T."/>
            <person name="Parson-Quintana B."/>
            <person name="Reilly L.P."/>
            <person name="Richardson P."/>
            <person name="Robinson D.L."/>
            <person name="Rubin E."/>
            <person name="Saunders E."/>
            <person name="Tapia R."/>
            <person name="Tesmer J.G."/>
            <person name="Thayer N."/>
            <person name="Thompson L.S."/>
            <person name="Tice H."/>
            <person name="Ticknor L.O."/>
            <person name="Wills P.L."/>
            <person name="Brettin T.S."/>
            <person name="Gilna P."/>
        </authorList>
    </citation>
    <scope>NUCLEOTIDE SEQUENCE [LARGE SCALE GENOMIC DNA]</scope>
    <source>
        <strain>ZK / E33L</strain>
    </source>
</reference>
<comment type="subcellular location">
    <subcellularLocation>
        <location evidence="1">Cell membrane</location>
        <topology evidence="1">Single-pass membrane protein</topology>
    </subcellularLocation>
</comment>
<comment type="similarity">
    <text evidence="1">Belongs to the UPF0154 family.</text>
</comment>
<evidence type="ECO:0000255" key="1">
    <source>
        <dbReference type="HAMAP-Rule" id="MF_00363"/>
    </source>
</evidence>
<protein>
    <recommendedName>
        <fullName evidence="1">UPF0154 protein BCE33L3386</fullName>
    </recommendedName>
</protein>
<proteinExistence type="inferred from homology"/>
<accession>Q637E7</accession>
<gene>
    <name type="ordered locus">BCE33L3386</name>
</gene>
<feature type="chain" id="PRO_1000005623" description="UPF0154 protein BCE33L3386">
    <location>
        <begin position="1"/>
        <end position="73"/>
    </location>
</feature>
<feature type="transmembrane region" description="Helical" evidence="1">
    <location>
        <begin position="3"/>
        <end position="23"/>
    </location>
</feature>
<name>Y3386_BACCZ</name>
<organism>
    <name type="scientific">Bacillus cereus (strain ZK / E33L)</name>
    <dbReference type="NCBI Taxonomy" id="288681"/>
    <lineage>
        <taxon>Bacteria</taxon>
        <taxon>Bacillati</taxon>
        <taxon>Bacillota</taxon>
        <taxon>Bacilli</taxon>
        <taxon>Bacillales</taxon>
        <taxon>Bacillaceae</taxon>
        <taxon>Bacillus</taxon>
        <taxon>Bacillus cereus group</taxon>
    </lineage>
</organism>